<sequence length="491" mass="54876">MRSAAAALSVCVLAVLLHWICWTDRSAELLGFRAADRPKADVREVLVGVLSARHNHELRQAIRDTWLGYLKQHPHFQNRVLVKFIIGAQGCSVPLEDLEDQYSCSQLELSEAAVSGQEMAILSVPDSSALLQSDVPVLSLDFKVLHSVVITQLGVFPNKPPHYLKGNITVRLLQVDQEEAVISARFSSVSPGTAADGMFYKPVEQFILPKGFEGTLLWEAEDSTALMSVNTSALRLNNGGGVLHFRSIEEGTLPHRNALGFPGLAGGFTFTVYDVEVLSEMLRGRSGRQKIREAQLKGEDEALQEESLRHGDMVFVDVVGTYRNVPSKLLQFYKWSVENADFSLLLKTDDDCFIDVDAVLMKMQRRRLTHTSLWWGNFRQNWAVDRVGKWQELEYASPAYPAFACGSGYVVSRDLVQWLASNAQHLKAYQGEDVSMGIWMAAVGPRKYQDSGWLCEKECYVDMLSSPQHSAEELRLLWSRKNKCGDPCGCS</sequence>
<protein>
    <recommendedName>
        <fullName>UDP-GalNAc:beta-1,3-N-acetylgalactosaminyltransferase 2</fullName>
        <shortName>Beta-1,3-GalNAc-T2</shortName>
        <ecNumber evidence="2">2.4.1.313</ecNumber>
    </recommendedName>
    <alternativeName>
        <fullName>Beta-1,3-N-acetylgalactosaminyltransferase II</fullName>
    </alternativeName>
</protein>
<organism>
    <name type="scientific">Danio rerio</name>
    <name type="common">Zebrafish</name>
    <name type="synonym">Brachydanio rerio</name>
    <dbReference type="NCBI Taxonomy" id="7955"/>
    <lineage>
        <taxon>Eukaryota</taxon>
        <taxon>Metazoa</taxon>
        <taxon>Chordata</taxon>
        <taxon>Craniata</taxon>
        <taxon>Vertebrata</taxon>
        <taxon>Euteleostomi</taxon>
        <taxon>Actinopterygii</taxon>
        <taxon>Neopterygii</taxon>
        <taxon>Teleostei</taxon>
        <taxon>Ostariophysi</taxon>
        <taxon>Cypriniformes</taxon>
        <taxon>Danionidae</taxon>
        <taxon>Danioninae</taxon>
        <taxon>Danio</taxon>
    </lineage>
</organism>
<dbReference type="EC" id="2.4.1.313" evidence="2"/>
<dbReference type="EMBL" id="BC095777">
    <property type="protein sequence ID" value="AAH95777.1"/>
    <property type="molecule type" value="mRNA"/>
</dbReference>
<dbReference type="RefSeq" id="NP_001018523.1">
    <property type="nucleotide sequence ID" value="NM_001020687.1"/>
</dbReference>
<dbReference type="SMR" id="Q502B3"/>
<dbReference type="FunCoup" id="Q502B3">
    <property type="interactions" value="1087"/>
</dbReference>
<dbReference type="STRING" id="7955.ENSDARP00000067823"/>
<dbReference type="CAZy" id="GT31">
    <property type="family name" value="Glycosyltransferase Family 31"/>
</dbReference>
<dbReference type="GlyCosmos" id="Q502B3">
    <property type="glycosylation" value="2 sites, No reported glycans"/>
</dbReference>
<dbReference type="PaxDb" id="7955-ENSDARP00000067823"/>
<dbReference type="GeneID" id="553716"/>
<dbReference type="KEGG" id="dre:553716"/>
<dbReference type="AGR" id="ZFIN:ZDB-GENE-050522-358"/>
<dbReference type="CTD" id="148789"/>
<dbReference type="ZFIN" id="ZDB-GENE-050522-358">
    <property type="gene designation" value="b3galnt2"/>
</dbReference>
<dbReference type="eggNOG" id="KOG2287">
    <property type="taxonomic scope" value="Eukaryota"/>
</dbReference>
<dbReference type="InParanoid" id="Q502B3"/>
<dbReference type="OrthoDB" id="2139606at2759"/>
<dbReference type="PhylomeDB" id="Q502B3"/>
<dbReference type="Reactome" id="R-DRE-5173105">
    <property type="pathway name" value="O-linked glycosylation"/>
</dbReference>
<dbReference type="UniPathway" id="UPA00378"/>
<dbReference type="PRO" id="PR:Q502B3"/>
<dbReference type="Proteomes" id="UP000000437">
    <property type="component" value="Alternate scaffold 13"/>
</dbReference>
<dbReference type="Proteomes" id="UP000000437">
    <property type="component" value="Chromosome 13"/>
</dbReference>
<dbReference type="GO" id="GO:0005783">
    <property type="term" value="C:endoplasmic reticulum"/>
    <property type="evidence" value="ECO:0000250"/>
    <property type="project" value="UniProtKB"/>
</dbReference>
<dbReference type="GO" id="GO:0000139">
    <property type="term" value="C:Golgi membrane"/>
    <property type="evidence" value="ECO:0000318"/>
    <property type="project" value="GO_Central"/>
</dbReference>
<dbReference type="GO" id="GO:0008376">
    <property type="term" value="F:acetylgalactosaminyltransferase activity"/>
    <property type="evidence" value="ECO:0000250"/>
    <property type="project" value="UniProtKB"/>
</dbReference>
<dbReference type="GO" id="GO:0008194">
    <property type="term" value="F:UDP-glycosyltransferase activity"/>
    <property type="evidence" value="ECO:0000318"/>
    <property type="project" value="GO_Central"/>
</dbReference>
<dbReference type="GO" id="GO:0055001">
    <property type="term" value="P:muscle cell development"/>
    <property type="evidence" value="ECO:0000315"/>
    <property type="project" value="ZFIN"/>
</dbReference>
<dbReference type="GO" id="GO:0006486">
    <property type="term" value="P:protein glycosylation"/>
    <property type="evidence" value="ECO:0000315"/>
    <property type="project" value="UniProtKB"/>
</dbReference>
<dbReference type="GO" id="GO:0006493">
    <property type="term" value="P:protein O-linked glycosylation"/>
    <property type="evidence" value="ECO:0000250"/>
    <property type="project" value="UniProtKB"/>
</dbReference>
<dbReference type="FunFam" id="3.90.550.50:FF:000013">
    <property type="entry name" value="Hexosyltransferase"/>
    <property type="match status" value="1"/>
</dbReference>
<dbReference type="Gene3D" id="3.90.550.50">
    <property type="match status" value="1"/>
</dbReference>
<dbReference type="InterPro" id="IPR002659">
    <property type="entry name" value="Glyco_trans_31"/>
</dbReference>
<dbReference type="PANTHER" id="PTHR11214">
    <property type="entry name" value="BETA-1,3-N-ACETYLGLUCOSAMINYLTRANSFERASE"/>
    <property type="match status" value="1"/>
</dbReference>
<dbReference type="PANTHER" id="PTHR11214:SF219">
    <property type="entry name" value="UDP-GALNAC:BETA-1,3-N-ACETYLGALACTOSAMINYLTRANSFERASE 2"/>
    <property type="match status" value="1"/>
</dbReference>
<dbReference type="Pfam" id="PF01762">
    <property type="entry name" value="Galactosyl_T"/>
    <property type="match status" value="1"/>
</dbReference>
<name>B3GL2_DANRE</name>
<proteinExistence type="evidence at transcript level"/>
<keyword id="KW-0256">Endoplasmic reticulum</keyword>
<keyword id="KW-0325">Glycoprotein</keyword>
<keyword id="KW-0328">Glycosyltransferase</keyword>
<keyword id="KW-0333">Golgi apparatus</keyword>
<keyword id="KW-0472">Membrane</keyword>
<keyword id="KW-1185">Reference proteome</keyword>
<keyword id="KW-0735">Signal-anchor</keyword>
<keyword id="KW-0808">Transferase</keyword>
<keyword id="KW-0812">Transmembrane</keyword>
<keyword id="KW-1133">Transmembrane helix</keyword>
<gene>
    <name type="primary">b3galnt2</name>
    <name type="ORF">zgc:112351</name>
</gene>
<evidence type="ECO:0000250" key="1"/>
<evidence type="ECO:0000250" key="2">
    <source>
        <dbReference type="UniProtKB" id="Q8NCR0"/>
    </source>
</evidence>
<evidence type="ECO:0000255" key="3"/>
<evidence type="ECO:0000269" key="4">
    <source>
    </source>
</evidence>
<evidence type="ECO:0000305" key="5"/>
<comment type="function">
    <text evidence="4">Beta-1,3-N-acetylgalactosaminyltransferase that synthesizes a unique carbohydrate structure, GalNAc-beta-1-3GlcNAc, on N- and O-glycans. Has no galactose nor galactosaminyl transferase activity toward any acceptor substrate. Involved in alpha-dystroglycan (dag1) glycosylation.</text>
</comment>
<comment type="catalytic activity">
    <reaction evidence="2">
        <text>3-O-(N-acetyl-beta-D-glucosaminyl-(1-&gt;4)-alpha-D-mannosyl)-L-threonyl-[protein] + UDP-N-acetyl-alpha-D-galactosamine = 3-O-[beta-D-GalNAc-(1-&gt;3)-beta-D-GlcNAc-(1-&gt;4)-alpha-D-Man]-L-Thr-[protein] + UDP + H(+)</text>
        <dbReference type="Rhea" id="RHEA:37667"/>
        <dbReference type="Rhea" id="RHEA-COMP:13308"/>
        <dbReference type="Rhea" id="RHEA-COMP:13618"/>
        <dbReference type="ChEBI" id="CHEBI:15378"/>
        <dbReference type="ChEBI" id="CHEBI:58223"/>
        <dbReference type="ChEBI" id="CHEBI:67138"/>
        <dbReference type="ChEBI" id="CHEBI:136709"/>
        <dbReference type="ChEBI" id="CHEBI:137540"/>
        <dbReference type="EC" id="2.4.1.313"/>
    </reaction>
</comment>
<comment type="pathway">
    <text>Protein modification; protein glycosylation.</text>
</comment>
<comment type="subcellular location">
    <subcellularLocation>
        <location evidence="1">Golgi apparatus membrane</location>
        <topology evidence="1">Single-pass type II membrane protein</topology>
    </subcellularLocation>
    <subcellularLocation>
        <location evidence="1">Endoplasmic reticulum</location>
    </subcellularLocation>
</comment>
<comment type="similarity">
    <text evidence="5">Belongs to the glycosyltransferase 31 family.</text>
</comment>
<reference key="1">
    <citation type="submission" date="2005-05" db="EMBL/GenBank/DDBJ databases">
        <authorList>
            <consortium name="NIH - Zebrafish Gene Collection (ZGC) project"/>
        </authorList>
    </citation>
    <scope>NUCLEOTIDE SEQUENCE [LARGE SCALE MRNA]</scope>
    <source>
        <strain>AB</strain>
        <tissue>Embryo</tissue>
    </source>
</reference>
<reference key="2">
    <citation type="journal article" date="2013" name="Am. J. Hum. Genet.">
        <title>Mutations in B3GALNT2 cause congenital muscular dystrophy and hypoglycosylation of alpha-dystroglycan.</title>
        <authorList>
            <consortium name="UK10K Consortium"/>
            <person name="Stevens E."/>
            <person name="Carss K.J."/>
            <person name="Cirak S."/>
            <person name="Foley A.R."/>
            <person name="Torelli S."/>
            <person name="Willer T."/>
            <person name="Tambunan D.E."/>
            <person name="Yau S."/>
            <person name="Brodd L."/>
            <person name="Sewry C.A."/>
            <person name="Feng L."/>
            <person name="Haliloglu G."/>
            <person name="Orhan D."/>
            <person name="Dobyns W.B."/>
            <person name="Enns G.M."/>
            <person name="Manning M."/>
            <person name="Krause A."/>
            <person name="Salih M.A."/>
            <person name="Walsh C.A."/>
            <person name="Hurles M."/>
            <person name="Campbell K.P."/>
            <person name="Manzini M.C."/>
            <person name="Stemple D."/>
            <person name="Lin Y.Y."/>
            <person name="Muntoni F."/>
        </authorList>
    </citation>
    <scope>FUNCTION</scope>
</reference>
<accession>Q502B3</accession>
<feature type="chain" id="PRO_0000248364" description="UDP-GalNAc:beta-1,3-N-acetylgalactosaminyltransferase 2">
    <location>
        <begin position="1"/>
        <end position="491"/>
    </location>
</feature>
<feature type="topological domain" description="Cytoplasmic" evidence="3">
    <location>
        <begin position="1"/>
        <end position="2"/>
    </location>
</feature>
<feature type="transmembrane region" description="Helical; Signal-anchor for type II membrane protein" evidence="3">
    <location>
        <begin position="3"/>
        <end position="23"/>
    </location>
</feature>
<feature type="topological domain" description="Lumenal" evidence="3">
    <location>
        <begin position="24"/>
        <end position="491"/>
    </location>
</feature>
<feature type="glycosylation site" description="N-linked (GlcNAc...) asparagine" evidence="3">
    <location>
        <position position="167"/>
    </location>
</feature>
<feature type="glycosylation site" description="N-linked (GlcNAc...) asparagine" evidence="3">
    <location>
        <position position="230"/>
    </location>
</feature>